<comment type="function">
    <text evidence="1">This is one of the proteins that binds to the 5S RNA in the ribosome where it forms part of the central protuberance.</text>
</comment>
<comment type="subunit">
    <text evidence="1">Part of the 50S ribosomal subunit; part of the 5S rRNA/L5/L18/L25 subcomplex. Contacts the 5S rRNA. Binds to the 5S rRNA independently of L5 and L18.</text>
</comment>
<comment type="similarity">
    <text evidence="1">Belongs to the bacterial ribosomal protein bL25 family. CTC subfamily.</text>
</comment>
<keyword id="KW-1185">Reference proteome</keyword>
<keyword id="KW-0687">Ribonucleoprotein</keyword>
<keyword id="KW-0689">Ribosomal protein</keyword>
<keyword id="KW-0694">RNA-binding</keyword>
<keyword id="KW-0699">rRNA-binding</keyword>
<dbReference type="EMBL" id="CP000747">
    <property type="protein sequence ID" value="ACG79272.1"/>
    <property type="molecule type" value="Genomic_DNA"/>
</dbReference>
<dbReference type="RefSeq" id="WP_012523410.1">
    <property type="nucleotide sequence ID" value="NC_011144.1"/>
</dbReference>
<dbReference type="SMR" id="B4R8Q7"/>
<dbReference type="STRING" id="450851.PHZ_c2863"/>
<dbReference type="KEGG" id="pzu:PHZ_c2863"/>
<dbReference type="eggNOG" id="COG1825">
    <property type="taxonomic scope" value="Bacteria"/>
</dbReference>
<dbReference type="HOGENOM" id="CLU_075939_0_0_5"/>
<dbReference type="OrthoDB" id="9806411at2"/>
<dbReference type="Proteomes" id="UP000001868">
    <property type="component" value="Chromosome"/>
</dbReference>
<dbReference type="GO" id="GO:0022625">
    <property type="term" value="C:cytosolic large ribosomal subunit"/>
    <property type="evidence" value="ECO:0007669"/>
    <property type="project" value="TreeGrafter"/>
</dbReference>
<dbReference type="GO" id="GO:0008097">
    <property type="term" value="F:5S rRNA binding"/>
    <property type="evidence" value="ECO:0007669"/>
    <property type="project" value="InterPro"/>
</dbReference>
<dbReference type="GO" id="GO:0003735">
    <property type="term" value="F:structural constituent of ribosome"/>
    <property type="evidence" value="ECO:0007669"/>
    <property type="project" value="InterPro"/>
</dbReference>
<dbReference type="GO" id="GO:0006412">
    <property type="term" value="P:translation"/>
    <property type="evidence" value="ECO:0007669"/>
    <property type="project" value="UniProtKB-UniRule"/>
</dbReference>
<dbReference type="CDD" id="cd00495">
    <property type="entry name" value="Ribosomal_L25_TL5_CTC"/>
    <property type="match status" value="1"/>
</dbReference>
<dbReference type="Gene3D" id="2.170.120.20">
    <property type="entry name" value="Ribosomal protein L25, beta domain"/>
    <property type="match status" value="1"/>
</dbReference>
<dbReference type="Gene3D" id="2.40.240.10">
    <property type="entry name" value="Ribosomal Protein L25, Chain P"/>
    <property type="match status" value="1"/>
</dbReference>
<dbReference type="HAMAP" id="MF_01334">
    <property type="entry name" value="Ribosomal_bL25_CTC"/>
    <property type="match status" value="1"/>
</dbReference>
<dbReference type="InterPro" id="IPR020056">
    <property type="entry name" value="Rbsml_bL25/Gln-tRNA_synth_N"/>
</dbReference>
<dbReference type="InterPro" id="IPR011035">
    <property type="entry name" value="Ribosomal_bL25/Gln-tRNA_synth"/>
</dbReference>
<dbReference type="InterPro" id="IPR020057">
    <property type="entry name" value="Ribosomal_bL25_b-dom"/>
</dbReference>
<dbReference type="InterPro" id="IPR037121">
    <property type="entry name" value="Ribosomal_bL25_C"/>
</dbReference>
<dbReference type="InterPro" id="IPR001021">
    <property type="entry name" value="Ribosomal_bL25_long"/>
</dbReference>
<dbReference type="InterPro" id="IPR029751">
    <property type="entry name" value="Ribosomal_L25_dom"/>
</dbReference>
<dbReference type="InterPro" id="IPR020930">
    <property type="entry name" value="Ribosomal_uL5_bac-type"/>
</dbReference>
<dbReference type="NCBIfam" id="TIGR00731">
    <property type="entry name" value="bL25_bact_ctc"/>
    <property type="match status" value="1"/>
</dbReference>
<dbReference type="NCBIfam" id="NF004128">
    <property type="entry name" value="PRK05618.1-2"/>
    <property type="match status" value="1"/>
</dbReference>
<dbReference type="PANTHER" id="PTHR33284">
    <property type="entry name" value="RIBOSOMAL PROTEIN L25/GLN-TRNA SYNTHETASE, ANTI-CODON-BINDING DOMAIN-CONTAINING PROTEIN"/>
    <property type="match status" value="1"/>
</dbReference>
<dbReference type="PANTHER" id="PTHR33284:SF1">
    <property type="entry name" value="RIBOSOMAL PROTEIN L25_GLN-TRNA SYNTHETASE, ANTI-CODON-BINDING DOMAIN-CONTAINING PROTEIN"/>
    <property type="match status" value="1"/>
</dbReference>
<dbReference type="Pfam" id="PF01386">
    <property type="entry name" value="Ribosomal_L25p"/>
    <property type="match status" value="1"/>
</dbReference>
<dbReference type="Pfam" id="PF14693">
    <property type="entry name" value="Ribosomal_TL5_C"/>
    <property type="match status" value="1"/>
</dbReference>
<dbReference type="SUPFAM" id="SSF50715">
    <property type="entry name" value="Ribosomal protein L25-like"/>
    <property type="match status" value="1"/>
</dbReference>
<organism>
    <name type="scientific">Phenylobacterium zucineum (strain HLK1)</name>
    <dbReference type="NCBI Taxonomy" id="450851"/>
    <lineage>
        <taxon>Bacteria</taxon>
        <taxon>Pseudomonadati</taxon>
        <taxon>Pseudomonadota</taxon>
        <taxon>Alphaproteobacteria</taxon>
        <taxon>Caulobacterales</taxon>
        <taxon>Caulobacteraceae</taxon>
        <taxon>Phenylobacterium</taxon>
    </lineage>
</organism>
<sequence length="208" mass="22022">MAEIVLNVEVRERTGTGGARDTRRSGMVPGVLYGGDKDPVAIAVRANEFRKALYTGKLLGHLVTLKYGNETQPVIAKAVDMHPVTDEPQHFDLYRVDEHQQIKIEVPVHFTNQDDSPGLKRGGTLNVALHTLTVSCPADSIPEEIVFDLTGLEIGATIRVADLKLPAKAEAAVDGETVVASVAGAMAEVAEEAAEGAEGEAAAEGGEE</sequence>
<evidence type="ECO:0000255" key="1">
    <source>
        <dbReference type="HAMAP-Rule" id="MF_01334"/>
    </source>
</evidence>
<evidence type="ECO:0000305" key="2"/>
<gene>
    <name evidence="1" type="primary">rplY</name>
    <name evidence="1" type="synonym">ctc</name>
    <name type="ordered locus">PHZ_c2863</name>
</gene>
<feature type="chain" id="PRO_1000142543" description="Large ribosomal subunit protein bL25">
    <location>
        <begin position="1"/>
        <end position="208"/>
    </location>
</feature>
<proteinExistence type="inferred from homology"/>
<protein>
    <recommendedName>
        <fullName evidence="1">Large ribosomal subunit protein bL25</fullName>
    </recommendedName>
    <alternativeName>
        <fullName evidence="2">50S ribosomal protein L25</fullName>
    </alternativeName>
    <alternativeName>
        <fullName evidence="1">General stress protein CTC</fullName>
    </alternativeName>
</protein>
<name>RL25_PHEZH</name>
<reference key="1">
    <citation type="journal article" date="2008" name="BMC Genomics">
        <title>Complete genome of Phenylobacterium zucineum - a novel facultative intracellular bacterium isolated from human erythroleukemia cell line K562.</title>
        <authorList>
            <person name="Luo Y."/>
            <person name="Xu X."/>
            <person name="Ding Z."/>
            <person name="Liu Z."/>
            <person name="Zhang B."/>
            <person name="Yan Z."/>
            <person name="Sun J."/>
            <person name="Hu S."/>
            <person name="Hu X."/>
        </authorList>
    </citation>
    <scope>NUCLEOTIDE SEQUENCE [LARGE SCALE GENOMIC DNA]</scope>
    <source>
        <strain>HLK1</strain>
    </source>
</reference>
<accession>B4R8Q7</accession>